<keyword id="KW-0963">Cytoplasm</keyword>
<keyword id="KW-0489">Methyltransferase</keyword>
<keyword id="KW-0694">RNA-binding</keyword>
<keyword id="KW-0698">rRNA processing</keyword>
<keyword id="KW-0949">S-adenosyl-L-methionine</keyword>
<keyword id="KW-0808">Transferase</keyword>
<sequence length="403" mass="45202">MTESTFPQYPRLVLSKGREKSLLRRHPWVFSGAVSRLEGKANLGETIDIVDHQGKWLARGAWSPASQIRARVWTFDKAESIDIAFFTRRLRQAQQWRDWLAKKDGLDSYRLIAGESDGLPGVTIDRFGHFLVLQLLSAGAEYQRAALISALQTCYPDCAIYDRSDVAVRKKEGMALTQGPVTGELPPALLPIEEYGMKLLVDIQGGHKTGYYLDQRDSRLATRRYVENQRVLNCFSYTGGFAVSALMGGCRQVVSVDTSQDALDIARQNVELNQLDLSKAEFVRDDVFKLLRAYREHGEKFDVIIMDPPKFVENKSQLMGACRGYKDINMLAIQLLNPGGILLTFSCSGLMTSDLFQKIIADAAIDAGRDVQFIEQFRQAADHPVIATYPEGLYLKGFACRVM</sequence>
<protein>
    <recommendedName>
        <fullName evidence="1">Ribosomal RNA large subunit methyltransferase I</fullName>
        <ecNumber evidence="1">2.1.1.191</ecNumber>
    </recommendedName>
    <alternativeName>
        <fullName evidence="1">23S rRNA m5C1962 methyltransferase</fullName>
    </alternativeName>
    <alternativeName>
        <fullName evidence="1">rRNA (cytosine-C(5)-)-methyltransferase RlmI</fullName>
    </alternativeName>
</protein>
<name>RLMI_SALCH</name>
<gene>
    <name evidence="1" type="primary">rlmI</name>
    <name type="ordered locus">SCH_1032</name>
</gene>
<comment type="function">
    <text evidence="1">Specifically methylates the cytosine at position 1962 (m5C1962) of 23S rRNA.</text>
</comment>
<comment type="catalytic activity">
    <reaction evidence="1">
        <text>cytidine(1962) in 23S rRNA + S-adenosyl-L-methionine = 5-methylcytidine(1962) in 23S rRNA + S-adenosyl-L-homocysteine + H(+)</text>
        <dbReference type="Rhea" id="RHEA:42912"/>
        <dbReference type="Rhea" id="RHEA-COMP:10382"/>
        <dbReference type="Rhea" id="RHEA-COMP:10386"/>
        <dbReference type="ChEBI" id="CHEBI:15378"/>
        <dbReference type="ChEBI" id="CHEBI:57856"/>
        <dbReference type="ChEBI" id="CHEBI:59789"/>
        <dbReference type="ChEBI" id="CHEBI:74483"/>
        <dbReference type="ChEBI" id="CHEBI:82748"/>
        <dbReference type="EC" id="2.1.1.191"/>
    </reaction>
</comment>
<comment type="subcellular location">
    <subcellularLocation>
        <location evidence="1">Cytoplasm</location>
    </subcellularLocation>
</comment>
<comment type="similarity">
    <text evidence="1">Belongs to the methyltransferase superfamily. RlmI family.</text>
</comment>
<comment type="sequence caution" evidence="2">
    <conflict type="erroneous initiation">
        <sequence resource="EMBL-CDS" id="AAX64938"/>
    </conflict>
</comment>
<feature type="chain" id="PRO_0000366241" description="Ribosomal RNA large subunit methyltransferase I">
    <location>
        <begin position="1"/>
        <end position="403"/>
    </location>
</feature>
<feature type="domain" description="PUA" evidence="1">
    <location>
        <begin position="9"/>
        <end position="88"/>
    </location>
</feature>
<accession>Q57QS3</accession>
<proteinExistence type="inferred from homology"/>
<reference key="1">
    <citation type="journal article" date="2005" name="Nucleic Acids Res.">
        <title>The genome sequence of Salmonella enterica serovar Choleraesuis, a highly invasive and resistant zoonotic pathogen.</title>
        <authorList>
            <person name="Chiu C.-H."/>
            <person name="Tang P."/>
            <person name="Chu C."/>
            <person name="Hu S."/>
            <person name="Bao Q."/>
            <person name="Yu J."/>
            <person name="Chou Y.-Y."/>
            <person name="Wang H.-S."/>
            <person name="Lee Y.-S."/>
        </authorList>
    </citation>
    <scope>NUCLEOTIDE SEQUENCE [LARGE SCALE GENOMIC DNA]</scope>
    <source>
        <strain>SC-B67</strain>
    </source>
</reference>
<organism>
    <name type="scientific">Salmonella choleraesuis (strain SC-B67)</name>
    <dbReference type="NCBI Taxonomy" id="321314"/>
    <lineage>
        <taxon>Bacteria</taxon>
        <taxon>Pseudomonadati</taxon>
        <taxon>Pseudomonadota</taxon>
        <taxon>Gammaproteobacteria</taxon>
        <taxon>Enterobacterales</taxon>
        <taxon>Enterobacteriaceae</taxon>
        <taxon>Salmonella</taxon>
    </lineage>
</organism>
<evidence type="ECO:0000255" key="1">
    <source>
        <dbReference type="HAMAP-Rule" id="MF_01857"/>
    </source>
</evidence>
<evidence type="ECO:0000305" key="2"/>
<dbReference type="EC" id="2.1.1.191" evidence="1"/>
<dbReference type="EMBL" id="AE017220">
    <property type="protein sequence ID" value="AAX64938.1"/>
    <property type="status" value="ALT_INIT"/>
    <property type="molecule type" value="Genomic_DNA"/>
</dbReference>
<dbReference type="RefSeq" id="WP_023234842.1">
    <property type="nucleotide sequence ID" value="NC_006905.1"/>
</dbReference>
<dbReference type="SMR" id="Q57QS3"/>
<dbReference type="KEGG" id="sec:SCH_1032"/>
<dbReference type="HOGENOM" id="CLU_014042_0_0_6"/>
<dbReference type="Proteomes" id="UP000000538">
    <property type="component" value="Chromosome"/>
</dbReference>
<dbReference type="GO" id="GO:0005737">
    <property type="term" value="C:cytoplasm"/>
    <property type="evidence" value="ECO:0007669"/>
    <property type="project" value="UniProtKB-SubCell"/>
</dbReference>
<dbReference type="GO" id="GO:0003723">
    <property type="term" value="F:RNA binding"/>
    <property type="evidence" value="ECO:0007669"/>
    <property type="project" value="UniProtKB-KW"/>
</dbReference>
<dbReference type="GO" id="GO:0016434">
    <property type="term" value="F:rRNA (cytosine) methyltransferase activity"/>
    <property type="evidence" value="ECO:0007669"/>
    <property type="project" value="UniProtKB-UniRule"/>
</dbReference>
<dbReference type="CDD" id="cd02440">
    <property type="entry name" value="AdoMet_MTases"/>
    <property type="match status" value="1"/>
</dbReference>
<dbReference type="CDD" id="cd21153">
    <property type="entry name" value="PUA_RlmI"/>
    <property type="match status" value="1"/>
</dbReference>
<dbReference type="CDD" id="cd11572">
    <property type="entry name" value="RlmI_M_like"/>
    <property type="match status" value="1"/>
</dbReference>
<dbReference type="FunFam" id="3.40.50.150:FF:000044">
    <property type="entry name" value="Ribosomal RNA large subunit methyltransferase I"/>
    <property type="match status" value="1"/>
</dbReference>
<dbReference type="Gene3D" id="2.30.130.10">
    <property type="entry name" value="PUA domain"/>
    <property type="match status" value="1"/>
</dbReference>
<dbReference type="Gene3D" id="3.30.750.80">
    <property type="entry name" value="RNA methyltransferase domain (HRMD) like"/>
    <property type="match status" value="1"/>
</dbReference>
<dbReference type="Gene3D" id="3.40.50.150">
    <property type="entry name" value="Vaccinia Virus protein VP39"/>
    <property type="match status" value="1"/>
</dbReference>
<dbReference type="HAMAP" id="MF_01857">
    <property type="entry name" value="23SrRNA_methyltr_I"/>
    <property type="match status" value="1"/>
</dbReference>
<dbReference type="InterPro" id="IPR002478">
    <property type="entry name" value="PUA"/>
</dbReference>
<dbReference type="InterPro" id="IPR015947">
    <property type="entry name" value="PUA-like_sf"/>
</dbReference>
<dbReference type="InterPro" id="IPR036974">
    <property type="entry name" value="PUA_sf"/>
</dbReference>
<dbReference type="InterPro" id="IPR023542">
    <property type="entry name" value="RLMI"/>
</dbReference>
<dbReference type="InterPro" id="IPR041532">
    <property type="entry name" value="RlmI-like_PUA"/>
</dbReference>
<dbReference type="InterPro" id="IPR019614">
    <property type="entry name" value="SAM-dep_methyl-trfase"/>
</dbReference>
<dbReference type="InterPro" id="IPR029063">
    <property type="entry name" value="SAM-dependent_MTases_sf"/>
</dbReference>
<dbReference type="NCBIfam" id="NF011707">
    <property type="entry name" value="PRK15128.1"/>
    <property type="match status" value="1"/>
</dbReference>
<dbReference type="PANTHER" id="PTHR42873">
    <property type="entry name" value="RIBOSOMAL RNA LARGE SUBUNIT METHYLTRANSFERASE"/>
    <property type="match status" value="1"/>
</dbReference>
<dbReference type="PANTHER" id="PTHR42873:SF1">
    <property type="entry name" value="S-ADENOSYLMETHIONINE-DEPENDENT METHYLTRANSFERASE DOMAIN-CONTAINING PROTEIN"/>
    <property type="match status" value="1"/>
</dbReference>
<dbReference type="Pfam" id="PF10672">
    <property type="entry name" value="Methyltrans_SAM"/>
    <property type="match status" value="1"/>
</dbReference>
<dbReference type="Pfam" id="PF17785">
    <property type="entry name" value="PUA_3"/>
    <property type="match status" value="1"/>
</dbReference>
<dbReference type="SMART" id="SM00359">
    <property type="entry name" value="PUA"/>
    <property type="match status" value="1"/>
</dbReference>
<dbReference type="SUPFAM" id="SSF88697">
    <property type="entry name" value="PUA domain-like"/>
    <property type="match status" value="1"/>
</dbReference>
<dbReference type="SUPFAM" id="SSF53335">
    <property type="entry name" value="S-adenosyl-L-methionine-dependent methyltransferases"/>
    <property type="match status" value="1"/>
</dbReference>
<dbReference type="PROSITE" id="PS50890">
    <property type="entry name" value="PUA"/>
    <property type="match status" value="1"/>
</dbReference>